<evidence type="ECO:0000255" key="1">
    <source>
        <dbReference type="HAMAP-Rule" id="MF_02017"/>
    </source>
</evidence>
<evidence type="ECO:0000256" key="2">
    <source>
        <dbReference type="SAM" id="MobiDB-lite"/>
    </source>
</evidence>
<organism>
    <name type="scientific">Salmonella gallinarum (strain 287/91 / NCTC 13346)</name>
    <dbReference type="NCBI Taxonomy" id="550538"/>
    <lineage>
        <taxon>Bacteria</taxon>
        <taxon>Pseudomonadati</taxon>
        <taxon>Pseudomonadota</taxon>
        <taxon>Gammaproteobacteria</taxon>
        <taxon>Enterobacterales</taxon>
        <taxon>Enterobacteriaceae</taxon>
        <taxon>Salmonella</taxon>
    </lineage>
</organism>
<sequence length="334" mass="35652">MNTEATHDQNEAQTTGVRLRNAREQLGLSQQAVAERLCLKVSTVRDIEEDKAPSDLASTFLRGYIRSYARLVHVPEEELLPGLEKQAPLRAAKVAPMQSFSLGKRRKKRDGWLMSFTWLVLFVVVGLTGAWWWQNHKAHQEEITTMADQSTAGLNADKDSGQSVPLDTGAVTSQDTTPAQTAPAPATPVDSTAATQTPAPTAAATQNTVVAPSQANVDTAATSAAPAATETPSALPTSQAGVAAPAADPNALVMNFTADCWLEVTDATGKRLFSGMQRKDGNLNLTGQAPYKLKIGAPAAVQIQYQGKPVDLSRFIRTNQVARLTLNAEPTPAQ</sequence>
<name>RODZ_SALG2</name>
<gene>
    <name evidence="1" type="primary">rodZ</name>
    <name type="ordered locus">SG2559</name>
</gene>
<comment type="function">
    <text evidence="1">Cytoskeletal protein that is involved in cell-shape control through regulation of the length of the long axis.</text>
</comment>
<comment type="subcellular location">
    <subcellularLocation>
        <location evidence="1">Cell inner membrane</location>
        <topology evidence="1">Single-pass type II membrane protein</topology>
    </subcellularLocation>
    <text evidence="1">Forms helical filaments along the long axis of the cell.</text>
</comment>
<comment type="domain">
    <text evidence="1">The helix-turn-helix (HTH) motif in the cytoplasmic domain of the N-terminus is involved in the formation of spirals to maintain the rigid rod shape. As this protein is anchored in the cytoplasmic membrane, the HTH motif may contribute to protein-protein interactions to form the RodZ helix, which is localized beneath the cytoplasmic membrane. The C-terminal domain may be critical for determination of the rod shape by probably interacting with enzymes required for synthesis of the peptidoglycan layer, including PBPs in the periplasm.</text>
</comment>
<comment type="similarity">
    <text evidence="1">Belongs to the RodZ family.</text>
</comment>
<keyword id="KW-0997">Cell inner membrane</keyword>
<keyword id="KW-1003">Cell membrane</keyword>
<keyword id="KW-0133">Cell shape</keyword>
<keyword id="KW-0238">DNA-binding</keyword>
<keyword id="KW-0472">Membrane</keyword>
<keyword id="KW-0735">Signal-anchor</keyword>
<keyword id="KW-0812">Transmembrane</keyword>
<keyword id="KW-1133">Transmembrane helix</keyword>
<reference key="1">
    <citation type="journal article" date="2008" name="Genome Res.">
        <title>Comparative genome analysis of Salmonella enteritidis PT4 and Salmonella gallinarum 287/91 provides insights into evolutionary and host adaptation pathways.</title>
        <authorList>
            <person name="Thomson N.R."/>
            <person name="Clayton D.J."/>
            <person name="Windhorst D."/>
            <person name="Vernikos G."/>
            <person name="Davidson S."/>
            <person name="Churcher C."/>
            <person name="Quail M.A."/>
            <person name="Stevens M."/>
            <person name="Jones M.A."/>
            <person name="Watson M."/>
            <person name="Barron A."/>
            <person name="Layton A."/>
            <person name="Pickard D."/>
            <person name="Kingsley R.A."/>
            <person name="Bignell A."/>
            <person name="Clark L."/>
            <person name="Harris B."/>
            <person name="Ormond D."/>
            <person name="Abdellah Z."/>
            <person name="Brooks K."/>
            <person name="Cherevach I."/>
            <person name="Chillingworth T."/>
            <person name="Woodward J."/>
            <person name="Norberczak H."/>
            <person name="Lord A."/>
            <person name="Arrowsmith C."/>
            <person name="Jagels K."/>
            <person name="Moule S."/>
            <person name="Mungall K."/>
            <person name="Saunders M."/>
            <person name="Whitehead S."/>
            <person name="Chabalgoity J.A."/>
            <person name="Maskell D."/>
            <person name="Humphreys T."/>
            <person name="Roberts M."/>
            <person name="Barrow P.A."/>
            <person name="Dougan G."/>
            <person name="Parkhill J."/>
        </authorList>
    </citation>
    <scope>NUCLEOTIDE SEQUENCE [LARGE SCALE GENOMIC DNA]</scope>
    <source>
        <strain>287/91 / NCTC 13346</strain>
    </source>
</reference>
<proteinExistence type="inferred from homology"/>
<accession>B5RCZ3</accession>
<dbReference type="EMBL" id="AM933173">
    <property type="protein sequence ID" value="CAR38379.1"/>
    <property type="molecule type" value="Genomic_DNA"/>
</dbReference>
<dbReference type="RefSeq" id="WP_001090879.1">
    <property type="nucleotide sequence ID" value="NC_011274.1"/>
</dbReference>
<dbReference type="SMR" id="B5RCZ3"/>
<dbReference type="KEGG" id="seg:SG2559"/>
<dbReference type="HOGENOM" id="CLU_047530_3_1_6"/>
<dbReference type="Proteomes" id="UP000008321">
    <property type="component" value="Chromosome"/>
</dbReference>
<dbReference type="GO" id="GO:0005886">
    <property type="term" value="C:plasma membrane"/>
    <property type="evidence" value="ECO:0007669"/>
    <property type="project" value="UniProtKB-SubCell"/>
</dbReference>
<dbReference type="GO" id="GO:0003677">
    <property type="term" value="F:DNA binding"/>
    <property type="evidence" value="ECO:0007669"/>
    <property type="project" value="UniProtKB-KW"/>
</dbReference>
<dbReference type="GO" id="GO:0008360">
    <property type="term" value="P:regulation of cell shape"/>
    <property type="evidence" value="ECO:0007669"/>
    <property type="project" value="UniProtKB-UniRule"/>
</dbReference>
<dbReference type="CDD" id="cd00093">
    <property type="entry name" value="HTH_XRE"/>
    <property type="match status" value="1"/>
</dbReference>
<dbReference type="FunFam" id="1.10.260.40:FF:000014">
    <property type="entry name" value="Cytoskeleton protein RodZ"/>
    <property type="match status" value="1"/>
</dbReference>
<dbReference type="Gene3D" id="1.10.260.40">
    <property type="entry name" value="lambda repressor-like DNA-binding domains"/>
    <property type="match status" value="1"/>
</dbReference>
<dbReference type="HAMAP" id="MF_02017">
    <property type="entry name" value="RodZ"/>
    <property type="match status" value="1"/>
</dbReference>
<dbReference type="InterPro" id="IPR050400">
    <property type="entry name" value="Bact_Cytoskel_RodZ"/>
</dbReference>
<dbReference type="InterPro" id="IPR001387">
    <property type="entry name" value="Cro/C1-type_HTH"/>
</dbReference>
<dbReference type="InterPro" id="IPR010982">
    <property type="entry name" value="Lambda_DNA-bd_dom_sf"/>
</dbReference>
<dbReference type="InterPro" id="IPR023690">
    <property type="entry name" value="RodZ"/>
</dbReference>
<dbReference type="InterPro" id="IPR025194">
    <property type="entry name" value="RodZ-like_C"/>
</dbReference>
<dbReference type="NCBIfam" id="NF008109">
    <property type="entry name" value="PRK10856.1"/>
    <property type="match status" value="1"/>
</dbReference>
<dbReference type="PANTHER" id="PTHR34475">
    <property type="match status" value="1"/>
</dbReference>
<dbReference type="PANTHER" id="PTHR34475:SF1">
    <property type="entry name" value="CYTOSKELETON PROTEIN RODZ"/>
    <property type="match status" value="1"/>
</dbReference>
<dbReference type="Pfam" id="PF13413">
    <property type="entry name" value="HTH_25"/>
    <property type="match status" value="1"/>
</dbReference>
<dbReference type="Pfam" id="PF13464">
    <property type="entry name" value="RodZ_C"/>
    <property type="match status" value="1"/>
</dbReference>
<dbReference type="SMART" id="SM00530">
    <property type="entry name" value="HTH_XRE"/>
    <property type="match status" value="1"/>
</dbReference>
<dbReference type="SUPFAM" id="SSF47413">
    <property type="entry name" value="lambda repressor-like DNA-binding domains"/>
    <property type="match status" value="1"/>
</dbReference>
<dbReference type="PROSITE" id="PS50943">
    <property type="entry name" value="HTH_CROC1"/>
    <property type="match status" value="1"/>
</dbReference>
<protein>
    <recommendedName>
        <fullName evidence="1">Cytoskeleton protein RodZ</fullName>
    </recommendedName>
</protein>
<feature type="chain" id="PRO_0000361852" description="Cytoskeleton protein RodZ">
    <location>
        <begin position="1"/>
        <end position="334"/>
    </location>
</feature>
<feature type="topological domain" description="Cytoplasmic" evidence="1">
    <location>
        <begin position="1"/>
        <end position="111"/>
    </location>
</feature>
<feature type="transmembrane region" description="Helical; Signal-anchor for type II membrane protein" evidence="1">
    <location>
        <begin position="112"/>
        <end position="132"/>
    </location>
</feature>
<feature type="topological domain" description="Periplasmic" evidence="1">
    <location>
        <begin position="133"/>
        <end position="334"/>
    </location>
</feature>
<feature type="domain" description="HTH cro/C1-type" evidence="1">
    <location>
        <begin position="19"/>
        <end position="71"/>
    </location>
</feature>
<feature type="DNA-binding region" description="H-T-H motif" evidence="1">
    <location>
        <begin position="30"/>
        <end position="49"/>
    </location>
</feature>
<feature type="region of interest" description="Disordered" evidence="2">
    <location>
        <begin position="152"/>
        <end position="210"/>
    </location>
</feature>
<feature type="compositionally biased region" description="Polar residues" evidence="2">
    <location>
        <begin position="161"/>
        <end position="175"/>
    </location>
</feature>
<feature type="compositionally biased region" description="Low complexity" evidence="2">
    <location>
        <begin position="176"/>
        <end position="210"/>
    </location>
</feature>